<accession>Q0SRD8</accession>
<reference key="1">
    <citation type="journal article" date="2006" name="Genome Res.">
        <title>Skewed genomic variability in strains of the toxigenic bacterial pathogen, Clostridium perfringens.</title>
        <authorList>
            <person name="Myers G.S.A."/>
            <person name="Rasko D.A."/>
            <person name="Cheung J.K."/>
            <person name="Ravel J."/>
            <person name="Seshadri R."/>
            <person name="DeBoy R.T."/>
            <person name="Ren Q."/>
            <person name="Varga J."/>
            <person name="Awad M.M."/>
            <person name="Brinkac L.M."/>
            <person name="Daugherty S.C."/>
            <person name="Haft D.H."/>
            <person name="Dodson R.J."/>
            <person name="Madupu R."/>
            <person name="Nelson W.C."/>
            <person name="Rosovitz M.J."/>
            <person name="Sullivan S.A."/>
            <person name="Khouri H."/>
            <person name="Dimitrov G.I."/>
            <person name="Watkins K.L."/>
            <person name="Mulligan S."/>
            <person name="Benton J."/>
            <person name="Radune D."/>
            <person name="Fisher D.J."/>
            <person name="Atkins H.S."/>
            <person name="Hiscox T."/>
            <person name="Jost B.H."/>
            <person name="Billington S.J."/>
            <person name="Songer J.G."/>
            <person name="McClane B.A."/>
            <person name="Titball R.W."/>
            <person name="Rood J.I."/>
            <person name="Melville S.B."/>
            <person name="Paulsen I.T."/>
        </authorList>
    </citation>
    <scope>NUCLEOTIDE SEQUENCE [LARGE SCALE GENOMIC DNA]</scope>
    <source>
        <strain>SM101 / Type A</strain>
    </source>
</reference>
<sequence>MDKKKYIRNFSIVAHIDHGKSTLADRLLEKTGTLTQREMEQQVLDTMELEKERGITIKSQAARLIYKRENGEEYILNLIDTPGHVDFTYEVSRSLAACEGAILVVDATQGIQAQTLANCYLALDNDLEIVPVINKVDLASARPDEIKQEIEDVIGIEAEDAPLVSAKTGLNIEDVLEEIVEKIPAPEGDENAPLKALIFDSYYDSYKGVVCHIRVKDGKVKPGTKIKLMSTDKVYEVVETGVFTPALMPLKEGLSAGEVGYITASIKNVRDARVGDTVTEAARPTEEALPGYKPAIPMVYSGIYPVDGAKYEELKEALEKLQINDAALSFEPETSVALGFGFRCGFLGLLHMEIIQERVEREFNLDIITTAPSVIYKVTKTNGESFDLTNPTNLPPMTEIAYMEEPVVKASIITPTDYTGAVMELCQDRRGKFIDMQYLEETRVVIHYEIPLNEIVYDFFDTLKSKTRGYASLDYELKGYEQSKLVKLDILLNGDNVDALSMIVPEVKAYQRGRAIAEKLKEIIPRHMFEVPIQAAVGSKIIARETVKAMRKDVLAKCYGGDISRKKKLLEKQKEGKKRMRQLGTVEVPQEAFMSVLKVD</sequence>
<comment type="function">
    <text evidence="1">Required for accurate and efficient protein synthesis under certain stress conditions. May act as a fidelity factor of the translation reaction, by catalyzing a one-codon backward translocation of tRNAs on improperly translocated ribosomes. Back-translocation proceeds from a post-translocation (POST) complex to a pre-translocation (PRE) complex, thus giving elongation factor G a second chance to translocate the tRNAs correctly. Binds to ribosomes in a GTP-dependent manner.</text>
</comment>
<comment type="catalytic activity">
    <reaction evidence="1">
        <text>GTP + H2O = GDP + phosphate + H(+)</text>
        <dbReference type="Rhea" id="RHEA:19669"/>
        <dbReference type="ChEBI" id="CHEBI:15377"/>
        <dbReference type="ChEBI" id="CHEBI:15378"/>
        <dbReference type="ChEBI" id="CHEBI:37565"/>
        <dbReference type="ChEBI" id="CHEBI:43474"/>
        <dbReference type="ChEBI" id="CHEBI:58189"/>
        <dbReference type="EC" id="3.6.5.n1"/>
    </reaction>
</comment>
<comment type="subcellular location">
    <subcellularLocation>
        <location evidence="1">Cell membrane</location>
        <topology evidence="1">Peripheral membrane protein</topology>
        <orientation evidence="1">Cytoplasmic side</orientation>
    </subcellularLocation>
</comment>
<comment type="similarity">
    <text evidence="1">Belongs to the TRAFAC class translation factor GTPase superfamily. Classic translation factor GTPase family. LepA subfamily.</text>
</comment>
<keyword id="KW-1003">Cell membrane</keyword>
<keyword id="KW-0342">GTP-binding</keyword>
<keyword id="KW-0378">Hydrolase</keyword>
<keyword id="KW-0472">Membrane</keyword>
<keyword id="KW-0547">Nucleotide-binding</keyword>
<keyword id="KW-0648">Protein biosynthesis</keyword>
<protein>
    <recommendedName>
        <fullName evidence="1">Elongation factor 4</fullName>
        <shortName evidence="1">EF-4</shortName>
        <ecNumber evidence="1">3.6.5.n1</ecNumber>
    </recommendedName>
    <alternativeName>
        <fullName evidence="1">Ribosomal back-translocase LepA</fullName>
    </alternativeName>
</protein>
<feature type="chain" id="PRO_0000265650" description="Elongation factor 4">
    <location>
        <begin position="1"/>
        <end position="600"/>
    </location>
</feature>
<feature type="domain" description="tr-type G">
    <location>
        <begin position="5"/>
        <end position="187"/>
    </location>
</feature>
<feature type="binding site" evidence="1">
    <location>
        <begin position="17"/>
        <end position="22"/>
    </location>
    <ligand>
        <name>GTP</name>
        <dbReference type="ChEBI" id="CHEBI:37565"/>
    </ligand>
</feature>
<feature type="binding site" evidence="1">
    <location>
        <begin position="134"/>
        <end position="137"/>
    </location>
    <ligand>
        <name>GTP</name>
        <dbReference type="ChEBI" id="CHEBI:37565"/>
    </ligand>
</feature>
<gene>
    <name evidence="1" type="primary">lepA</name>
    <name type="ordered locus">CPR_2010</name>
</gene>
<dbReference type="EC" id="3.6.5.n1" evidence="1"/>
<dbReference type="EMBL" id="CP000312">
    <property type="protein sequence ID" value="ABG85726.1"/>
    <property type="molecule type" value="Genomic_DNA"/>
</dbReference>
<dbReference type="RefSeq" id="WP_003451176.1">
    <property type="nucleotide sequence ID" value="NC_008262.1"/>
</dbReference>
<dbReference type="SMR" id="Q0SRD8"/>
<dbReference type="KEGG" id="cpr:CPR_2010"/>
<dbReference type="Proteomes" id="UP000001824">
    <property type="component" value="Chromosome"/>
</dbReference>
<dbReference type="GO" id="GO:0005886">
    <property type="term" value="C:plasma membrane"/>
    <property type="evidence" value="ECO:0007669"/>
    <property type="project" value="UniProtKB-SubCell"/>
</dbReference>
<dbReference type="GO" id="GO:0005525">
    <property type="term" value="F:GTP binding"/>
    <property type="evidence" value="ECO:0007669"/>
    <property type="project" value="UniProtKB-UniRule"/>
</dbReference>
<dbReference type="GO" id="GO:0003924">
    <property type="term" value="F:GTPase activity"/>
    <property type="evidence" value="ECO:0007669"/>
    <property type="project" value="UniProtKB-UniRule"/>
</dbReference>
<dbReference type="GO" id="GO:0043022">
    <property type="term" value="F:ribosome binding"/>
    <property type="evidence" value="ECO:0007669"/>
    <property type="project" value="UniProtKB-UniRule"/>
</dbReference>
<dbReference type="GO" id="GO:0003746">
    <property type="term" value="F:translation elongation factor activity"/>
    <property type="evidence" value="ECO:0007669"/>
    <property type="project" value="UniProtKB-UniRule"/>
</dbReference>
<dbReference type="GO" id="GO:0045727">
    <property type="term" value="P:positive regulation of translation"/>
    <property type="evidence" value="ECO:0007669"/>
    <property type="project" value="UniProtKB-UniRule"/>
</dbReference>
<dbReference type="CDD" id="cd03699">
    <property type="entry name" value="EF4_II"/>
    <property type="match status" value="1"/>
</dbReference>
<dbReference type="CDD" id="cd16260">
    <property type="entry name" value="EF4_III"/>
    <property type="match status" value="1"/>
</dbReference>
<dbReference type="CDD" id="cd01890">
    <property type="entry name" value="LepA"/>
    <property type="match status" value="1"/>
</dbReference>
<dbReference type="CDD" id="cd03709">
    <property type="entry name" value="lepA_C"/>
    <property type="match status" value="1"/>
</dbReference>
<dbReference type="FunFam" id="3.40.50.300:FF:000078">
    <property type="entry name" value="Elongation factor 4"/>
    <property type="match status" value="1"/>
</dbReference>
<dbReference type="FunFam" id="2.40.30.10:FF:000015">
    <property type="entry name" value="Translation factor GUF1, mitochondrial"/>
    <property type="match status" value="1"/>
</dbReference>
<dbReference type="FunFam" id="3.30.70.240:FF:000007">
    <property type="entry name" value="Translation factor GUF1, mitochondrial"/>
    <property type="match status" value="1"/>
</dbReference>
<dbReference type="FunFam" id="3.30.70.2570:FF:000001">
    <property type="entry name" value="Translation factor GUF1, mitochondrial"/>
    <property type="match status" value="1"/>
</dbReference>
<dbReference type="FunFam" id="3.30.70.870:FF:000004">
    <property type="entry name" value="Translation factor GUF1, mitochondrial"/>
    <property type="match status" value="1"/>
</dbReference>
<dbReference type="Gene3D" id="3.30.70.240">
    <property type="match status" value="1"/>
</dbReference>
<dbReference type="Gene3D" id="3.30.70.2570">
    <property type="entry name" value="Elongation factor 4, C-terminal domain"/>
    <property type="match status" value="1"/>
</dbReference>
<dbReference type="Gene3D" id="3.30.70.870">
    <property type="entry name" value="Elongation Factor G (Translational Gtpase), domain 3"/>
    <property type="match status" value="1"/>
</dbReference>
<dbReference type="Gene3D" id="3.40.50.300">
    <property type="entry name" value="P-loop containing nucleotide triphosphate hydrolases"/>
    <property type="match status" value="1"/>
</dbReference>
<dbReference type="Gene3D" id="2.40.30.10">
    <property type="entry name" value="Translation factors"/>
    <property type="match status" value="1"/>
</dbReference>
<dbReference type="HAMAP" id="MF_00071">
    <property type="entry name" value="LepA"/>
    <property type="match status" value="1"/>
</dbReference>
<dbReference type="InterPro" id="IPR006297">
    <property type="entry name" value="EF-4"/>
</dbReference>
<dbReference type="InterPro" id="IPR035647">
    <property type="entry name" value="EFG_III/V"/>
</dbReference>
<dbReference type="InterPro" id="IPR000640">
    <property type="entry name" value="EFG_V-like"/>
</dbReference>
<dbReference type="InterPro" id="IPR004161">
    <property type="entry name" value="EFTu-like_2"/>
</dbReference>
<dbReference type="InterPro" id="IPR031157">
    <property type="entry name" value="G_TR_CS"/>
</dbReference>
<dbReference type="InterPro" id="IPR038363">
    <property type="entry name" value="LepA_C_sf"/>
</dbReference>
<dbReference type="InterPro" id="IPR013842">
    <property type="entry name" value="LepA_CTD"/>
</dbReference>
<dbReference type="InterPro" id="IPR035654">
    <property type="entry name" value="LepA_IV"/>
</dbReference>
<dbReference type="InterPro" id="IPR027417">
    <property type="entry name" value="P-loop_NTPase"/>
</dbReference>
<dbReference type="InterPro" id="IPR005225">
    <property type="entry name" value="Small_GTP-bd"/>
</dbReference>
<dbReference type="InterPro" id="IPR000795">
    <property type="entry name" value="T_Tr_GTP-bd_dom"/>
</dbReference>
<dbReference type="InterPro" id="IPR009000">
    <property type="entry name" value="Transl_B-barrel_sf"/>
</dbReference>
<dbReference type="NCBIfam" id="TIGR01393">
    <property type="entry name" value="lepA"/>
    <property type="match status" value="1"/>
</dbReference>
<dbReference type="NCBIfam" id="TIGR00231">
    <property type="entry name" value="small_GTP"/>
    <property type="match status" value="1"/>
</dbReference>
<dbReference type="PANTHER" id="PTHR43512:SF4">
    <property type="entry name" value="TRANSLATION FACTOR GUF1 HOMOLOG, CHLOROPLASTIC"/>
    <property type="match status" value="1"/>
</dbReference>
<dbReference type="PANTHER" id="PTHR43512">
    <property type="entry name" value="TRANSLATION FACTOR GUF1-RELATED"/>
    <property type="match status" value="1"/>
</dbReference>
<dbReference type="Pfam" id="PF00679">
    <property type="entry name" value="EFG_C"/>
    <property type="match status" value="1"/>
</dbReference>
<dbReference type="Pfam" id="PF00009">
    <property type="entry name" value="GTP_EFTU"/>
    <property type="match status" value="1"/>
</dbReference>
<dbReference type="Pfam" id="PF03144">
    <property type="entry name" value="GTP_EFTU_D2"/>
    <property type="match status" value="1"/>
</dbReference>
<dbReference type="Pfam" id="PF06421">
    <property type="entry name" value="LepA_C"/>
    <property type="match status" value="1"/>
</dbReference>
<dbReference type="PRINTS" id="PR00315">
    <property type="entry name" value="ELONGATNFCT"/>
</dbReference>
<dbReference type="SMART" id="SM00838">
    <property type="entry name" value="EFG_C"/>
    <property type="match status" value="1"/>
</dbReference>
<dbReference type="SUPFAM" id="SSF54980">
    <property type="entry name" value="EF-G C-terminal domain-like"/>
    <property type="match status" value="2"/>
</dbReference>
<dbReference type="SUPFAM" id="SSF52540">
    <property type="entry name" value="P-loop containing nucleoside triphosphate hydrolases"/>
    <property type="match status" value="1"/>
</dbReference>
<dbReference type="SUPFAM" id="SSF50447">
    <property type="entry name" value="Translation proteins"/>
    <property type="match status" value="1"/>
</dbReference>
<dbReference type="PROSITE" id="PS00301">
    <property type="entry name" value="G_TR_1"/>
    <property type="match status" value="1"/>
</dbReference>
<dbReference type="PROSITE" id="PS51722">
    <property type="entry name" value="G_TR_2"/>
    <property type="match status" value="1"/>
</dbReference>
<evidence type="ECO:0000255" key="1">
    <source>
        <dbReference type="HAMAP-Rule" id="MF_00071"/>
    </source>
</evidence>
<name>LEPA_CLOPS</name>
<proteinExistence type="inferred from homology"/>
<organism>
    <name type="scientific">Clostridium perfringens (strain SM101 / Type A)</name>
    <dbReference type="NCBI Taxonomy" id="289380"/>
    <lineage>
        <taxon>Bacteria</taxon>
        <taxon>Bacillati</taxon>
        <taxon>Bacillota</taxon>
        <taxon>Clostridia</taxon>
        <taxon>Eubacteriales</taxon>
        <taxon>Clostridiaceae</taxon>
        <taxon>Clostridium</taxon>
    </lineage>
</organism>